<reference key="1">
    <citation type="journal article" date="2000" name="Nucleic Acids Res.">
        <title>Complete genome sequence of the alkaliphilic bacterium Bacillus halodurans and genomic sequence comparison with Bacillus subtilis.</title>
        <authorList>
            <person name="Takami H."/>
            <person name="Nakasone K."/>
            <person name="Takaki Y."/>
            <person name="Maeno G."/>
            <person name="Sasaki R."/>
            <person name="Masui N."/>
            <person name="Fuji F."/>
            <person name="Hirama C."/>
            <person name="Nakamura Y."/>
            <person name="Ogasawara N."/>
            <person name="Kuhara S."/>
            <person name="Horikoshi K."/>
        </authorList>
    </citation>
    <scope>NUCLEOTIDE SEQUENCE [LARGE SCALE GENOMIC DNA]</scope>
    <source>
        <strain>ATCC BAA-125 / DSM 18197 / FERM 7344 / JCM 9153 / C-125</strain>
    </source>
</reference>
<proteinExistence type="inferred from homology"/>
<name>NTDP_HALH5</name>
<gene>
    <name type="ordered locus">BH0940</name>
</gene>
<accession>Q9KEB3</accession>
<comment type="function">
    <text evidence="1">Has nucleoside phosphatase activity towards nucleoside triphosphates and nucleoside diphosphates.</text>
</comment>
<comment type="catalytic activity">
    <reaction evidence="1">
        <text>a ribonucleoside 5'-triphosphate + H2O = a ribonucleoside 5'-diphosphate + phosphate + H(+)</text>
        <dbReference type="Rhea" id="RHEA:23680"/>
        <dbReference type="ChEBI" id="CHEBI:15377"/>
        <dbReference type="ChEBI" id="CHEBI:15378"/>
        <dbReference type="ChEBI" id="CHEBI:43474"/>
        <dbReference type="ChEBI" id="CHEBI:57930"/>
        <dbReference type="ChEBI" id="CHEBI:61557"/>
        <dbReference type="EC" id="3.6.1.15"/>
    </reaction>
</comment>
<comment type="catalytic activity">
    <reaction evidence="1">
        <text>a ribonucleoside 5'-diphosphate + H2O = a ribonucleoside 5'-phosphate + phosphate + H(+)</text>
        <dbReference type="Rhea" id="RHEA:36799"/>
        <dbReference type="ChEBI" id="CHEBI:15377"/>
        <dbReference type="ChEBI" id="CHEBI:15378"/>
        <dbReference type="ChEBI" id="CHEBI:43474"/>
        <dbReference type="ChEBI" id="CHEBI:57930"/>
        <dbReference type="ChEBI" id="CHEBI:58043"/>
        <dbReference type="EC" id="3.6.1.6"/>
    </reaction>
</comment>
<comment type="cofactor">
    <cofactor evidence="1">
        <name>Mg(2+)</name>
        <dbReference type="ChEBI" id="CHEBI:18420"/>
    </cofactor>
</comment>
<comment type="similarity">
    <text evidence="1">Belongs to the Ntdp family.</text>
</comment>
<feature type="chain" id="PRO_0000248088" description="Nucleoside triphosphate/diphosphate phosphatase">
    <location>
        <begin position="1"/>
        <end position="175"/>
    </location>
</feature>
<feature type="active site" description="Proton donor" evidence="1">
    <location>
        <position position="23"/>
    </location>
</feature>
<feature type="binding site" evidence="1">
    <location>
        <position position="87"/>
    </location>
    <ligand>
        <name>Mg(2+)</name>
        <dbReference type="ChEBI" id="CHEBI:18420"/>
        <label>1</label>
    </ligand>
</feature>
<feature type="binding site" evidence="1">
    <location>
        <position position="103"/>
    </location>
    <ligand>
        <name>Mg(2+)</name>
        <dbReference type="ChEBI" id="CHEBI:18420"/>
        <label>1</label>
    </ligand>
</feature>
<feature type="binding site" evidence="1">
    <location>
        <position position="105"/>
    </location>
    <ligand>
        <name>Mg(2+)</name>
        <dbReference type="ChEBI" id="CHEBI:18420"/>
        <label>2</label>
    </ligand>
</feature>
<feature type="binding site" evidence="1">
    <location>
        <position position="107"/>
    </location>
    <ligand>
        <name>Mg(2+)</name>
        <dbReference type="ChEBI" id="CHEBI:18420"/>
        <label>1</label>
    </ligand>
</feature>
<feature type="binding site" evidence="1">
    <location>
        <position position="107"/>
    </location>
    <ligand>
        <name>Mg(2+)</name>
        <dbReference type="ChEBI" id="CHEBI:18420"/>
        <label>2</label>
    </ligand>
</feature>
<feature type="binding site" evidence="1">
    <location>
        <position position="120"/>
    </location>
    <ligand>
        <name>Mg(2+)</name>
        <dbReference type="ChEBI" id="CHEBI:18420"/>
        <label>2</label>
    </ligand>
</feature>
<feature type="binding site" evidence="1">
    <location>
        <position position="123"/>
    </location>
    <ligand>
        <name>Mg(2+)</name>
        <dbReference type="ChEBI" id="CHEBI:18420"/>
        <label>2</label>
    </ligand>
</feature>
<keyword id="KW-0378">Hydrolase</keyword>
<keyword id="KW-0460">Magnesium</keyword>
<keyword id="KW-0479">Metal-binding</keyword>
<keyword id="KW-1185">Reference proteome</keyword>
<protein>
    <recommendedName>
        <fullName evidence="1">Nucleoside triphosphate/diphosphate phosphatase</fullName>
        <ecNumber evidence="1">3.6.1.15</ecNumber>
        <ecNumber evidence="1">3.6.1.6</ecNumber>
    </recommendedName>
</protein>
<organism>
    <name type="scientific">Halalkalibacterium halodurans (strain ATCC BAA-125 / DSM 18197 / FERM 7344 / JCM 9153 / C-125)</name>
    <name type="common">Bacillus halodurans</name>
    <dbReference type="NCBI Taxonomy" id="272558"/>
    <lineage>
        <taxon>Bacteria</taxon>
        <taxon>Bacillati</taxon>
        <taxon>Bacillota</taxon>
        <taxon>Bacilli</taxon>
        <taxon>Bacillales</taxon>
        <taxon>Bacillaceae</taxon>
        <taxon>Halalkalibacterium (ex Joshi et al. 2022)</taxon>
    </lineage>
</organism>
<sequence>MNFPKVGSKIQIQSYKHNGSIHRIWEETIVLKGTSKVVIGGNDRILVKESDGRHWRTREPAICYFDSEQWFNTIGMIRADGIYFYCNLGTPFTWDEEALKYIDYDLDIKVFPDMTFKLLDEDEYAMHRKMMKYPPEIDRILQRSVDELVSWIHQRKGPFAPQFVESWYERFLQYR</sequence>
<dbReference type="EC" id="3.6.1.15" evidence="1"/>
<dbReference type="EC" id="3.6.1.6" evidence="1"/>
<dbReference type="EMBL" id="BA000004">
    <property type="protein sequence ID" value="BAB04659.1"/>
    <property type="molecule type" value="Genomic_DNA"/>
</dbReference>
<dbReference type="PIR" id="D83767">
    <property type="entry name" value="D83767"/>
</dbReference>
<dbReference type="RefSeq" id="WP_010897112.1">
    <property type="nucleotide sequence ID" value="NC_002570.2"/>
</dbReference>
<dbReference type="SMR" id="Q9KEB3"/>
<dbReference type="STRING" id="272558.gene:10726814"/>
<dbReference type="GeneID" id="87596482"/>
<dbReference type="KEGG" id="bha:BH0940"/>
<dbReference type="eggNOG" id="COG3557">
    <property type="taxonomic scope" value="Bacteria"/>
</dbReference>
<dbReference type="HOGENOM" id="CLU_109787_1_0_9"/>
<dbReference type="OrthoDB" id="1645325at2"/>
<dbReference type="Proteomes" id="UP000001258">
    <property type="component" value="Chromosome"/>
</dbReference>
<dbReference type="GO" id="GO:0000287">
    <property type="term" value="F:magnesium ion binding"/>
    <property type="evidence" value="ECO:0007669"/>
    <property type="project" value="UniProtKB-UniRule"/>
</dbReference>
<dbReference type="GO" id="GO:0017110">
    <property type="term" value="F:nucleoside diphosphate phosphatase activity"/>
    <property type="evidence" value="ECO:0007669"/>
    <property type="project" value="UniProtKB-UniRule"/>
</dbReference>
<dbReference type="GO" id="GO:0017111">
    <property type="term" value="F:ribonucleoside triphosphate phosphatase activity"/>
    <property type="evidence" value="ECO:0007669"/>
    <property type="project" value="UniProtKB-UniRule"/>
</dbReference>
<dbReference type="Gene3D" id="2.40.380.10">
    <property type="entry name" value="FomD-like"/>
    <property type="match status" value="1"/>
</dbReference>
<dbReference type="HAMAP" id="MF_01568">
    <property type="entry name" value="Ntdp"/>
    <property type="match status" value="1"/>
</dbReference>
<dbReference type="InterPro" id="IPR007295">
    <property type="entry name" value="DUF402"/>
</dbReference>
<dbReference type="InterPro" id="IPR035930">
    <property type="entry name" value="FomD-like_sf"/>
</dbReference>
<dbReference type="InterPro" id="IPR050212">
    <property type="entry name" value="Ntdp-like"/>
</dbReference>
<dbReference type="InterPro" id="IPR016882">
    <property type="entry name" value="SA1684"/>
</dbReference>
<dbReference type="NCBIfam" id="NF010183">
    <property type="entry name" value="PRK13662.1"/>
    <property type="match status" value="1"/>
</dbReference>
<dbReference type="PANTHER" id="PTHR39159">
    <property type="match status" value="1"/>
</dbReference>
<dbReference type="PANTHER" id="PTHR39159:SF1">
    <property type="entry name" value="UPF0374 PROTEIN YGAC"/>
    <property type="match status" value="1"/>
</dbReference>
<dbReference type="Pfam" id="PF04167">
    <property type="entry name" value="DUF402"/>
    <property type="match status" value="1"/>
</dbReference>
<dbReference type="PIRSF" id="PIRSF028345">
    <property type="entry name" value="UCP028345"/>
    <property type="match status" value="1"/>
</dbReference>
<dbReference type="SUPFAM" id="SSF159234">
    <property type="entry name" value="FomD-like"/>
    <property type="match status" value="1"/>
</dbReference>
<evidence type="ECO:0000255" key="1">
    <source>
        <dbReference type="HAMAP-Rule" id="MF_01568"/>
    </source>
</evidence>